<dbReference type="EC" id="4.2.1.33" evidence="1"/>
<dbReference type="EMBL" id="CP000628">
    <property type="protein sequence ID" value="ACM28504.1"/>
    <property type="molecule type" value="Genomic_DNA"/>
</dbReference>
<dbReference type="RefSeq" id="WP_007698764.1">
    <property type="nucleotide sequence ID" value="NC_011985.1"/>
</dbReference>
<dbReference type="SMR" id="B9JET5"/>
<dbReference type="STRING" id="311403.Arad_4906"/>
<dbReference type="GeneID" id="86850375"/>
<dbReference type="KEGG" id="ara:Arad_4906"/>
<dbReference type="eggNOG" id="COG0066">
    <property type="taxonomic scope" value="Bacteria"/>
</dbReference>
<dbReference type="HOGENOM" id="CLU_081378_0_3_5"/>
<dbReference type="UniPathway" id="UPA00048">
    <property type="reaction ID" value="UER00071"/>
</dbReference>
<dbReference type="Proteomes" id="UP000001600">
    <property type="component" value="Chromosome 1"/>
</dbReference>
<dbReference type="GO" id="GO:0009316">
    <property type="term" value="C:3-isopropylmalate dehydratase complex"/>
    <property type="evidence" value="ECO:0007669"/>
    <property type="project" value="InterPro"/>
</dbReference>
<dbReference type="GO" id="GO:0003861">
    <property type="term" value="F:3-isopropylmalate dehydratase activity"/>
    <property type="evidence" value="ECO:0007669"/>
    <property type="project" value="UniProtKB-UniRule"/>
</dbReference>
<dbReference type="GO" id="GO:0009098">
    <property type="term" value="P:L-leucine biosynthetic process"/>
    <property type="evidence" value="ECO:0007669"/>
    <property type="project" value="UniProtKB-UniRule"/>
</dbReference>
<dbReference type="CDD" id="cd01577">
    <property type="entry name" value="IPMI_Swivel"/>
    <property type="match status" value="1"/>
</dbReference>
<dbReference type="FunFam" id="3.20.19.10:FF:000003">
    <property type="entry name" value="3-isopropylmalate dehydratase small subunit"/>
    <property type="match status" value="1"/>
</dbReference>
<dbReference type="Gene3D" id="3.20.19.10">
    <property type="entry name" value="Aconitase, domain 4"/>
    <property type="match status" value="1"/>
</dbReference>
<dbReference type="HAMAP" id="MF_01031">
    <property type="entry name" value="LeuD_type1"/>
    <property type="match status" value="1"/>
</dbReference>
<dbReference type="InterPro" id="IPR004431">
    <property type="entry name" value="3-IsopropMal_deHydase_ssu"/>
</dbReference>
<dbReference type="InterPro" id="IPR015928">
    <property type="entry name" value="Aconitase/3IPM_dehydase_swvl"/>
</dbReference>
<dbReference type="InterPro" id="IPR000573">
    <property type="entry name" value="AconitaseA/IPMdHydase_ssu_swvl"/>
</dbReference>
<dbReference type="InterPro" id="IPR033940">
    <property type="entry name" value="IPMI_Swivel"/>
</dbReference>
<dbReference type="InterPro" id="IPR050075">
    <property type="entry name" value="LeuD"/>
</dbReference>
<dbReference type="NCBIfam" id="TIGR00171">
    <property type="entry name" value="leuD"/>
    <property type="match status" value="1"/>
</dbReference>
<dbReference type="NCBIfam" id="NF002458">
    <property type="entry name" value="PRK01641.1"/>
    <property type="match status" value="1"/>
</dbReference>
<dbReference type="PANTHER" id="PTHR43345:SF5">
    <property type="entry name" value="3-ISOPROPYLMALATE DEHYDRATASE SMALL SUBUNIT"/>
    <property type="match status" value="1"/>
</dbReference>
<dbReference type="PANTHER" id="PTHR43345">
    <property type="entry name" value="3-ISOPROPYLMALATE DEHYDRATASE SMALL SUBUNIT 2-RELATED-RELATED"/>
    <property type="match status" value="1"/>
</dbReference>
<dbReference type="Pfam" id="PF00694">
    <property type="entry name" value="Aconitase_C"/>
    <property type="match status" value="1"/>
</dbReference>
<dbReference type="SUPFAM" id="SSF52016">
    <property type="entry name" value="LeuD/IlvD-like"/>
    <property type="match status" value="1"/>
</dbReference>
<reference key="1">
    <citation type="journal article" date="2009" name="J. Bacteriol.">
        <title>Genome sequences of three Agrobacterium biovars help elucidate the evolution of multichromosome genomes in bacteria.</title>
        <authorList>
            <person name="Slater S.C."/>
            <person name="Goldman B.S."/>
            <person name="Goodner B."/>
            <person name="Setubal J.C."/>
            <person name="Farrand S.K."/>
            <person name="Nester E.W."/>
            <person name="Burr T.J."/>
            <person name="Banta L."/>
            <person name="Dickerman A.W."/>
            <person name="Paulsen I."/>
            <person name="Otten L."/>
            <person name="Suen G."/>
            <person name="Welch R."/>
            <person name="Almeida N.F."/>
            <person name="Arnold F."/>
            <person name="Burton O.T."/>
            <person name="Du Z."/>
            <person name="Ewing A."/>
            <person name="Godsy E."/>
            <person name="Heisel S."/>
            <person name="Houmiel K.L."/>
            <person name="Jhaveri J."/>
            <person name="Lu J."/>
            <person name="Miller N.M."/>
            <person name="Norton S."/>
            <person name="Chen Q."/>
            <person name="Phoolcharoen W."/>
            <person name="Ohlin V."/>
            <person name="Ondrusek D."/>
            <person name="Pride N."/>
            <person name="Stricklin S.L."/>
            <person name="Sun J."/>
            <person name="Wheeler C."/>
            <person name="Wilson L."/>
            <person name="Zhu H."/>
            <person name="Wood D.W."/>
        </authorList>
    </citation>
    <scope>NUCLEOTIDE SEQUENCE [LARGE SCALE GENOMIC DNA]</scope>
    <source>
        <strain>K84 / ATCC BAA-868</strain>
    </source>
</reference>
<proteinExistence type="inferred from homology"/>
<sequence length="202" mass="22056">MDKFVKLTGVAAPLPVVNVDTDMIIPKDYLKTIKRTGLGTGLFAEARYNEDGSPNQDFVLNKPAYQNAKILVAGDNFGCGSSREHAPWALLDFGIRCVISTSFADIFYNNCFKNGILPIKVSQEDLDKLMDDASRGSNAILTIDLENLEITGPDGGSLKFELDEFKRHCLLNGLDDIGLTLEKASAIDKFEKSNAAAHPWAA</sequence>
<keyword id="KW-0028">Amino-acid biosynthesis</keyword>
<keyword id="KW-0100">Branched-chain amino acid biosynthesis</keyword>
<keyword id="KW-0432">Leucine biosynthesis</keyword>
<keyword id="KW-0456">Lyase</keyword>
<organism>
    <name type="scientific">Rhizobium rhizogenes (strain K84 / ATCC BAA-868)</name>
    <name type="common">Agrobacterium radiobacter</name>
    <dbReference type="NCBI Taxonomy" id="311403"/>
    <lineage>
        <taxon>Bacteria</taxon>
        <taxon>Pseudomonadati</taxon>
        <taxon>Pseudomonadota</taxon>
        <taxon>Alphaproteobacteria</taxon>
        <taxon>Hyphomicrobiales</taxon>
        <taxon>Rhizobiaceae</taxon>
        <taxon>Rhizobium/Agrobacterium group</taxon>
        <taxon>Rhizobium</taxon>
    </lineage>
</organism>
<protein>
    <recommendedName>
        <fullName evidence="1">3-isopropylmalate dehydratase small subunit</fullName>
        <ecNumber evidence="1">4.2.1.33</ecNumber>
    </recommendedName>
    <alternativeName>
        <fullName evidence="1">Alpha-IPM isomerase</fullName>
        <shortName evidence="1">IPMI</shortName>
    </alternativeName>
    <alternativeName>
        <fullName evidence="1">Isopropylmalate isomerase</fullName>
    </alternativeName>
</protein>
<accession>B9JET5</accession>
<gene>
    <name evidence="1" type="primary">leuD</name>
    <name type="ordered locus">Arad_4906</name>
</gene>
<feature type="chain" id="PRO_1000149395" description="3-isopropylmalate dehydratase small subunit">
    <location>
        <begin position="1"/>
        <end position="202"/>
    </location>
</feature>
<comment type="function">
    <text evidence="1">Catalyzes the isomerization between 2-isopropylmalate and 3-isopropylmalate, via the formation of 2-isopropylmaleate.</text>
</comment>
<comment type="catalytic activity">
    <reaction evidence="1">
        <text>(2R,3S)-3-isopropylmalate = (2S)-2-isopropylmalate</text>
        <dbReference type="Rhea" id="RHEA:32287"/>
        <dbReference type="ChEBI" id="CHEBI:1178"/>
        <dbReference type="ChEBI" id="CHEBI:35121"/>
        <dbReference type="EC" id="4.2.1.33"/>
    </reaction>
</comment>
<comment type="pathway">
    <text evidence="1">Amino-acid biosynthesis; L-leucine biosynthesis; L-leucine from 3-methyl-2-oxobutanoate: step 2/4.</text>
</comment>
<comment type="subunit">
    <text evidence="1">Heterodimer of LeuC and LeuD.</text>
</comment>
<comment type="similarity">
    <text evidence="1">Belongs to the LeuD family. LeuD type 1 subfamily.</text>
</comment>
<name>LEUD_RHIR8</name>
<evidence type="ECO:0000255" key="1">
    <source>
        <dbReference type="HAMAP-Rule" id="MF_01031"/>
    </source>
</evidence>